<organism>
    <name type="scientific">Olea europaea</name>
    <name type="common">Common olive</name>
    <dbReference type="NCBI Taxonomy" id="4146"/>
    <lineage>
        <taxon>Eukaryota</taxon>
        <taxon>Viridiplantae</taxon>
        <taxon>Streptophyta</taxon>
        <taxon>Embryophyta</taxon>
        <taxon>Tracheophyta</taxon>
        <taxon>Spermatophyta</taxon>
        <taxon>Magnoliopsida</taxon>
        <taxon>eudicotyledons</taxon>
        <taxon>Gunneridae</taxon>
        <taxon>Pentapetalae</taxon>
        <taxon>asterids</taxon>
        <taxon>lamiids</taxon>
        <taxon>Lamiales</taxon>
        <taxon>Oleaceae</taxon>
        <taxon>Oleeae</taxon>
        <taxon>Olea</taxon>
    </lineage>
</organism>
<keyword id="KW-0009">Actin-binding</keyword>
<keyword id="KW-0020">Allergen</keyword>
<keyword id="KW-0963">Cytoplasm</keyword>
<keyword id="KW-0206">Cytoskeleton</keyword>
<keyword id="KW-1015">Disulfide bond</keyword>
<keyword id="KW-0597">Phosphoprotein</keyword>
<reference key="1">
    <citation type="journal article" date="2012" name="PLoS ONE">
        <title>Characterization of profilin polymorphism in pollen with a focus on multifunctionality.</title>
        <authorList>
            <person name="Jimenez-Lopez J.C."/>
            <person name="Morales S."/>
            <person name="Castro A.J."/>
            <person name="Volkmann D."/>
            <person name="Rodriguez-Garcia M.I."/>
            <person name="Alche Jde D."/>
        </authorList>
    </citation>
    <scope>NUCLEOTIDE SEQUENCE [MRNA]</scope>
    <scope>POLYMORPHISM</scope>
    <source>
        <strain>cv. Villalonga</strain>
    </source>
</reference>
<reference key="2">
    <citation type="journal article" date="2013" name="PLoS ONE">
        <title>Analysis of the effects of polymorphism on pollen profilin structural functionality and the generation of conformational, T- and B-cell epitopes.</title>
        <authorList>
            <person name="Jimenez-Lopez J.C."/>
            <person name="Rodriguez-Garcia M.I."/>
            <person name="Alche J.D."/>
        </authorList>
    </citation>
    <scope>3D-STRUCTURE MODELING</scope>
    <scope>DISULFIDE BOND</scope>
</reference>
<protein>
    <recommendedName>
        <fullName>Profilin-4</fullName>
    </recommendedName>
    <alternativeName>
        <fullName>Pollen allergen Ole e 2</fullName>
    </alternativeName>
    <allergenName>Ole e 2</allergenName>
</protein>
<evidence type="ECO:0000250" key="1"/>
<evidence type="ECO:0000305" key="2"/>
<evidence type="ECO:0000305" key="3">
    <source>
    </source>
</evidence>
<dbReference type="EMBL" id="DQ640907">
    <property type="protein sequence ID" value="ABG33903.1"/>
    <property type="molecule type" value="mRNA"/>
</dbReference>
<dbReference type="SMR" id="P0DKG1"/>
<dbReference type="GO" id="GO:0005938">
    <property type="term" value="C:cell cortex"/>
    <property type="evidence" value="ECO:0007669"/>
    <property type="project" value="TreeGrafter"/>
</dbReference>
<dbReference type="GO" id="GO:0005856">
    <property type="term" value="C:cytoskeleton"/>
    <property type="evidence" value="ECO:0007669"/>
    <property type="project" value="UniProtKB-SubCell"/>
</dbReference>
<dbReference type="GO" id="GO:0003785">
    <property type="term" value="F:actin monomer binding"/>
    <property type="evidence" value="ECO:0007669"/>
    <property type="project" value="TreeGrafter"/>
</dbReference>
<dbReference type="CDD" id="cd00148">
    <property type="entry name" value="PROF"/>
    <property type="match status" value="1"/>
</dbReference>
<dbReference type="FunFam" id="3.30.450.30:FF:000001">
    <property type="entry name" value="Profilin"/>
    <property type="match status" value="1"/>
</dbReference>
<dbReference type="Gene3D" id="3.30.450.30">
    <property type="entry name" value="Dynein light chain 2a, cytoplasmic"/>
    <property type="match status" value="1"/>
</dbReference>
<dbReference type="InterPro" id="IPR048278">
    <property type="entry name" value="PFN"/>
</dbReference>
<dbReference type="InterPro" id="IPR005455">
    <property type="entry name" value="PFN_euk"/>
</dbReference>
<dbReference type="InterPro" id="IPR036140">
    <property type="entry name" value="PFN_sf"/>
</dbReference>
<dbReference type="InterPro" id="IPR027310">
    <property type="entry name" value="Profilin_CS"/>
</dbReference>
<dbReference type="PANTHER" id="PTHR11604">
    <property type="entry name" value="PROFILIN"/>
    <property type="match status" value="1"/>
</dbReference>
<dbReference type="PANTHER" id="PTHR11604:SF31">
    <property type="entry name" value="PROFILIN"/>
    <property type="match status" value="1"/>
</dbReference>
<dbReference type="Pfam" id="PF00235">
    <property type="entry name" value="Profilin"/>
    <property type="match status" value="1"/>
</dbReference>
<dbReference type="PRINTS" id="PR00392">
    <property type="entry name" value="PROFILIN"/>
</dbReference>
<dbReference type="PRINTS" id="PR01640">
    <property type="entry name" value="PROFILINPLNT"/>
</dbReference>
<dbReference type="SMART" id="SM00392">
    <property type="entry name" value="PROF"/>
    <property type="match status" value="1"/>
</dbReference>
<dbReference type="SUPFAM" id="SSF55770">
    <property type="entry name" value="Profilin (actin-binding protein)"/>
    <property type="match status" value="1"/>
</dbReference>
<dbReference type="PROSITE" id="PS00414">
    <property type="entry name" value="PROFILIN"/>
    <property type="match status" value="1"/>
</dbReference>
<name>PROCC_OLEEU</name>
<proteinExistence type="evidence at protein level"/>
<comment type="function">
    <text evidence="1">Binds to actin and affects the structure of the cytoskeleton. At high concentrations, profilin prevents the polymerization of actin, whereas it enhances it at low concentrations (By similarity).</text>
</comment>
<comment type="subunit">
    <text evidence="1">Occurs in many kinds of cells as a complex with monomeric actin in a 1:1 ratio.</text>
</comment>
<comment type="subcellular location">
    <subcellularLocation>
        <location evidence="1">Cytoplasm</location>
        <location evidence="1">Cytoskeleton</location>
    </subcellularLocation>
</comment>
<comment type="PTM">
    <text evidence="1">Phosphorylated by MAP kinases.</text>
</comment>
<comment type="polymorphism">
    <text>Several isoforms of the allergen exist due to polymorphism.</text>
</comment>
<comment type="allergen">
    <text>Causes an allergic reaction in human.</text>
</comment>
<comment type="miscellaneous">
    <text evidence="3">The variability of the residues taking part of IgE-binding epitopes might be responsible of the difference in cross-reactivity among olive pollen cultivars, and between distantly related pollen species, leading to a variable range of allergy reactions among atopic patients.</text>
</comment>
<comment type="similarity">
    <text evidence="2">Belongs to the profilin family.</text>
</comment>
<accession>P0DKG1</accession>
<accession>A4GFB8</accession>
<feature type="initiator methionine" description="Removed" evidence="1">
    <location>
        <position position="1"/>
    </location>
</feature>
<feature type="chain" id="PRO_0000425046" description="Profilin-4">
    <location>
        <begin position="2"/>
        <end position="131"/>
    </location>
</feature>
<feature type="short sequence motif" description="Involved in PIP2 interaction">
    <location>
        <begin position="81"/>
        <end position="97"/>
    </location>
</feature>
<feature type="modified residue" description="Phosphothreonine" evidence="1">
    <location>
        <position position="111"/>
    </location>
</feature>
<feature type="disulfide bond" evidence="3">
    <location>
        <begin position="13"/>
        <end position="115"/>
    </location>
</feature>
<sequence length="131" mass="14038">MSWQTYVDEHLMCDIEGHQLGSAAILGHAGTVWAQSTAFPQFKPEEIAAIMKDFDEPGHLAPTGMFVATAKYMVIAGEPGAVIRGKKGSGGITIKKTGQALVVGIYDEPMTPGQCNMVVERLGDYLLEQGL</sequence>